<feature type="transit peptide" description="Chloroplast" evidence="5">
    <location>
        <begin position="1"/>
        <end status="unknown"/>
    </location>
</feature>
<feature type="chain" id="PRO_0000455775" description="Ornithine decarboxylase 1A, chloroplastic">
    <location>
        <begin status="unknown"/>
        <end position="432"/>
    </location>
</feature>
<feature type="active site" description="Proton donor; shared with dimeric partner" evidence="4">
    <location>
        <position position="377"/>
    </location>
</feature>
<feature type="binding site" evidence="4">
    <location>
        <position position="227"/>
    </location>
    <ligand>
        <name>pyridoxal 5'-phosphate</name>
        <dbReference type="ChEBI" id="CHEBI:597326"/>
    </ligand>
</feature>
<feature type="binding site" evidence="4">
    <location>
        <position position="265"/>
    </location>
    <ligand>
        <name>pyridoxal 5'-phosphate</name>
        <dbReference type="ChEBI" id="CHEBI:597326"/>
    </ligand>
</feature>
<feature type="binding site" evidence="4">
    <location>
        <begin position="298"/>
        <end position="301"/>
    </location>
    <ligand>
        <name>pyridoxal 5'-phosphate</name>
        <dbReference type="ChEBI" id="CHEBI:597326"/>
    </ligand>
</feature>
<feature type="binding site" description="in other chain" evidence="3">
    <location>
        <begin position="341"/>
        <end position="342"/>
    </location>
    <ligand>
        <name>substrate</name>
        <note>ligand shared between dimeric partners</note>
    </ligand>
</feature>
<feature type="binding site" evidence="3">
    <location>
        <position position="378"/>
    </location>
    <ligand>
        <name>substrate</name>
        <note>ligand shared between dimeric partners</note>
    </ligand>
</feature>
<feature type="binding site" evidence="4">
    <location>
        <position position="406"/>
    </location>
    <ligand>
        <name>pyridoxal 5'-phosphate</name>
        <dbReference type="ChEBI" id="CHEBI:597326"/>
    </ligand>
</feature>
<feature type="site" description="Stacks against the aromatic ring of pyridoxal phosphate and stabilizes reaction intermediates" evidence="2">
    <location>
        <position position="224"/>
    </location>
</feature>
<feature type="modified residue" description="N6-(pyridoxal phosphate)lysine" evidence="4">
    <location>
        <position position="95"/>
    </location>
</feature>
<feature type="sequence conflict" description="In Ref. 2; BAS29588 and 1; BAA83427." evidence="11" ref="2 1">
    <original>I</original>
    <variation>M</variation>
    <location>
        <position position="78"/>
    </location>
</feature>
<feature type="sequence conflict" description="In Ref. 1; BAA83427." evidence="11" ref="1">
    <original>S</original>
    <variation>C</variation>
    <location>
        <position position="420"/>
    </location>
</feature>
<feature type="sequence conflict" description="In Ref. 2; BAS29588 and 1; BAA83427." evidence="11" ref="2 1">
    <original>A</original>
    <variation>T</variation>
    <location>
        <position position="429"/>
    </location>
</feature>
<gene>
    <name evidence="8" type="primary">ODC1A</name>
    <name evidence="9 10" type="synonym">ODC</name>
    <name type="synonym">ODC1</name>
    <name type="ORF">LOC107801491</name>
</gene>
<sequence>MAGQTIIVSGLNPAAILQSTIGGGASPTAAAAENGTRKVIPLSRDALQDFMLSIITQKLQDEKQPFYVLDLGEVVSLIDQWKSALPNIRPFYAVKCNPEPSFLSILSAMGSNFDCASRAEIEYVLSLGISPDRIVFANPCKPESDIIFAAKVGVNLTTYDSEDEVYKIRKHHPKSELLLRIKPMFDGNARCPMGPKYGALPEEVEPLLRAAQAARLTVSGVSFHIGSGDADSNAYLGAIAAAKEVFETAAKLGMSKMTVLDVGGGFTSGHQFTTAAVAVRSALKQHFDDQPELTIIAEPGRFFAETAFTLATTIIGKRVRGELREYWINDGLYGSMNCVLYDHATVNATPLAVLSNRTNVTCGGSKTFPTTVFGPTCDALDTVLRDYQLPELQVNDWLVFPNMGAYTKAAGSNFNGFNTSAIVTHLAYAYPS</sequence>
<organism>
    <name type="scientific">Nicotiana tabacum</name>
    <name type="common">Common tobacco</name>
    <dbReference type="NCBI Taxonomy" id="4097"/>
    <lineage>
        <taxon>Eukaryota</taxon>
        <taxon>Viridiplantae</taxon>
        <taxon>Streptophyta</taxon>
        <taxon>Embryophyta</taxon>
        <taxon>Tracheophyta</taxon>
        <taxon>Spermatophyta</taxon>
        <taxon>Magnoliopsida</taxon>
        <taxon>eudicotyledons</taxon>
        <taxon>Gunneridae</taxon>
        <taxon>Pentapetalae</taxon>
        <taxon>asterids</taxon>
        <taxon>lamiids</taxon>
        <taxon>Solanales</taxon>
        <taxon>Solanaceae</taxon>
        <taxon>Nicotianoideae</taxon>
        <taxon>Nicotianeae</taxon>
        <taxon>Nicotiana</taxon>
    </lineage>
</organism>
<proteinExistence type="evidence at transcript level"/>
<name>ODC1A_TOBAC</name>
<evidence type="ECO:0000250" key="1">
    <source>
        <dbReference type="UniProtKB" id="O22616"/>
    </source>
</evidence>
<evidence type="ECO:0000250" key="2">
    <source>
        <dbReference type="UniProtKB" id="P00860"/>
    </source>
</evidence>
<evidence type="ECO:0000250" key="3">
    <source>
        <dbReference type="UniProtKB" id="P07805"/>
    </source>
</evidence>
<evidence type="ECO:0000250" key="4">
    <source>
        <dbReference type="UniProtKB" id="P11926"/>
    </source>
</evidence>
<evidence type="ECO:0000255" key="5"/>
<evidence type="ECO:0000269" key="6">
    <source>
    </source>
</evidence>
<evidence type="ECO:0000269" key="7">
    <source>
    </source>
</evidence>
<evidence type="ECO:0000303" key="8">
    <source>
    </source>
</evidence>
<evidence type="ECO:0000303" key="9">
    <source ref="1"/>
</evidence>
<evidence type="ECO:0000303" key="10">
    <source ref="2"/>
</evidence>
<evidence type="ECO:0000305" key="11"/>
<accession>A0A1S4AUX8</accession>
<accession>A0A0M4URG0</accession>
<accession>Q9SXF3</accession>
<comment type="function">
    <text evidence="4 6 7">Involved in the biosynthesis of pyridine alkaloid natural products, leading mainly to the production of anabasine, anatabine, nicotine and nornicotine, effective deterrents against herbivores with antiparasitic and pesticide properties (neurotoxins); nornicotine serves as the precursor in the synthesis of the carcinogen compound N'-nitrosonornicotine (NNN) (PubMed:27126795, PubMed:32242247). Catalyzes the first and rate-limiting step of polyamine biosynthesis that converts ornithine into putrescine, which is the precursor for the polyamines, spermidine and spermine (By similarity). Polyamines are essential for cell proliferation and are implicated in cellular processes, ranging from DNA replication to apoptosis (By similarity).</text>
</comment>
<comment type="catalytic activity">
    <reaction evidence="4">
        <text>L-ornithine + H(+) = putrescine + CO2</text>
        <dbReference type="Rhea" id="RHEA:22964"/>
        <dbReference type="ChEBI" id="CHEBI:15378"/>
        <dbReference type="ChEBI" id="CHEBI:16526"/>
        <dbReference type="ChEBI" id="CHEBI:46911"/>
        <dbReference type="ChEBI" id="CHEBI:326268"/>
        <dbReference type="EC" id="4.1.1.17"/>
    </reaction>
</comment>
<comment type="cofactor">
    <cofactor evidence="4">
        <name>pyridoxal 5'-phosphate</name>
        <dbReference type="ChEBI" id="CHEBI:597326"/>
    </cofactor>
</comment>
<comment type="pathway">
    <text evidence="7">Alkaloid biosynthesis; nicotine biosynthesis.</text>
</comment>
<comment type="pathway">
    <text evidence="1">Amine and polyamine biosynthesis; putrescine biosynthesis via L-ornithine pathway; putrescine from L-ornithine: step 1/1.</text>
</comment>
<comment type="subunit">
    <text evidence="4">Homodimer (By similarity). Only the dimer is catalytically active, as the active sites are constructed of residues from both monomers (By similarity).</text>
</comment>
<comment type="subcellular location">
    <subcellularLocation>
        <location evidence="5">Plastid</location>
        <location evidence="5">Chloroplast</location>
    </subcellularLocation>
</comment>
<comment type="disruption phenotype">
    <text evidence="6 7">Reduced alkaloids and nicotin levels associated with a lower putrescine production (PubMed:32242247). Occasionally, an early senescence and a lower viability of the older leaves is observed (PubMed:32242247). Plants lacking both ODC1A and ODC1B have lower concentrations of nicotine and nornicotine as well as of polyamines (putrescine, spermidine and spermine), tyramine and phenolamides (caffeoylputrescine and dicaffeoylspermidine), but significantly higher levels of anatabine and of amino acids ornithine, arginine, aspartate, glutamate and glutamine; these phenotypes are associated with reduced plant growth and vigor, and are exacerbated by wounding and shoot apex removal (PubMed:27126795).</text>
</comment>
<comment type="similarity">
    <text evidence="11">Belongs to the Orn/Lys/Arg decarboxylase class-II family.</text>
</comment>
<dbReference type="EC" id="4.1.1.17" evidence="4"/>
<dbReference type="EMBL" id="AB031066">
    <property type="protein sequence ID" value="BAA83427.1"/>
    <property type="molecule type" value="Genomic_DNA"/>
</dbReference>
<dbReference type="EMBL" id="LC030209">
    <property type="protein sequence ID" value="BAS29588.1"/>
    <property type="molecule type" value="mRNA"/>
</dbReference>
<dbReference type="RefSeq" id="NP_001312626.1">
    <property type="nucleotide sequence ID" value="NM_001325697.1"/>
</dbReference>
<dbReference type="SMR" id="A0A1S4AUX8"/>
<dbReference type="STRING" id="4097.A0A1S4AUX8"/>
<dbReference type="PaxDb" id="4097-A0A1S4AUX8"/>
<dbReference type="GeneID" id="107801491"/>
<dbReference type="KEGG" id="nta:107801491"/>
<dbReference type="OMA" id="SFFVCDL"/>
<dbReference type="OrthoDB" id="5034579at2759"/>
<dbReference type="UniPathway" id="UPA00107"/>
<dbReference type="UniPathway" id="UPA00535">
    <property type="reaction ID" value="UER00288"/>
</dbReference>
<dbReference type="Proteomes" id="UP000084051">
    <property type="component" value="Unplaced"/>
</dbReference>
<dbReference type="GO" id="GO:0009507">
    <property type="term" value="C:chloroplast"/>
    <property type="evidence" value="ECO:0007669"/>
    <property type="project" value="UniProtKB-SubCell"/>
</dbReference>
<dbReference type="GO" id="GO:0005737">
    <property type="term" value="C:cytoplasm"/>
    <property type="evidence" value="ECO:0000318"/>
    <property type="project" value="GO_Central"/>
</dbReference>
<dbReference type="GO" id="GO:0004586">
    <property type="term" value="F:ornithine decarboxylase activity"/>
    <property type="evidence" value="ECO:0000318"/>
    <property type="project" value="GO_Central"/>
</dbReference>
<dbReference type="GO" id="GO:0009820">
    <property type="term" value="P:alkaloid metabolic process"/>
    <property type="evidence" value="ECO:0007669"/>
    <property type="project" value="UniProtKB-KW"/>
</dbReference>
<dbReference type="GO" id="GO:0042179">
    <property type="term" value="P:nicotine biosynthetic process"/>
    <property type="evidence" value="ECO:0000315"/>
    <property type="project" value="UniProtKB"/>
</dbReference>
<dbReference type="GO" id="GO:0006596">
    <property type="term" value="P:polyamine biosynthetic process"/>
    <property type="evidence" value="ECO:0000315"/>
    <property type="project" value="UniProtKB"/>
</dbReference>
<dbReference type="GO" id="GO:0033387">
    <property type="term" value="P:putrescine biosynthetic process from arginine, via ornithine"/>
    <property type="evidence" value="ECO:0000318"/>
    <property type="project" value="GO_Central"/>
</dbReference>
<dbReference type="GO" id="GO:0009611">
    <property type="term" value="P:response to wounding"/>
    <property type="evidence" value="ECO:0000315"/>
    <property type="project" value="UniProtKB"/>
</dbReference>
<dbReference type="GO" id="GO:1901695">
    <property type="term" value="P:tyramine biosynthetic process"/>
    <property type="evidence" value="ECO:0000315"/>
    <property type="project" value="UniProtKB"/>
</dbReference>
<dbReference type="CDD" id="cd00622">
    <property type="entry name" value="PLPDE_III_ODC"/>
    <property type="match status" value="1"/>
</dbReference>
<dbReference type="FunFam" id="3.20.20.10:FF:000005">
    <property type="entry name" value="Ornithine decarboxylase"/>
    <property type="match status" value="1"/>
</dbReference>
<dbReference type="Gene3D" id="3.20.20.10">
    <property type="entry name" value="Alanine racemase"/>
    <property type="match status" value="1"/>
</dbReference>
<dbReference type="Gene3D" id="2.40.37.10">
    <property type="entry name" value="Lyase, Ornithine Decarboxylase, Chain A, domain 1"/>
    <property type="match status" value="1"/>
</dbReference>
<dbReference type="InterPro" id="IPR009006">
    <property type="entry name" value="Ala_racemase/Decarboxylase_C"/>
</dbReference>
<dbReference type="InterPro" id="IPR022643">
    <property type="entry name" value="De-COase2_C"/>
</dbReference>
<dbReference type="InterPro" id="IPR022657">
    <property type="entry name" value="De-COase2_CS"/>
</dbReference>
<dbReference type="InterPro" id="IPR022644">
    <property type="entry name" value="De-COase2_N"/>
</dbReference>
<dbReference type="InterPro" id="IPR022653">
    <property type="entry name" value="De-COase2_pyr-phos_BS"/>
</dbReference>
<dbReference type="InterPro" id="IPR000183">
    <property type="entry name" value="Orn/DAP/Arg_de-COase"/>
</dbReference>
<dbReference type="InterPro" id="IPR002433">
    <property type="entry name" value="Orn_de-COase"/>
</dbReference>
<dbReference type="InterPro" id="IPR029066">
    <property type="entry name" value="PLP-binding_barrel"/>
</dbReference>
<dbReference type="PANTHER" id="PTHR11482">
    <property type="entry name" value="ARGININE/DIAMINOPIMELATE/ORNITHINE DECARBOXYLASE"/>
    <property type="match status" value="1"/>
</dbReference>
<dbReference type="PANTHER" id="PTHR11482:SF6">
    <property type="entry name" value="ORNITHINE DECARBOXYLASE 1-RELATED"/>
    <property type="match status" value="1"/>
</dbReference>
<dbReference type="Pfam" id="PF02784">
    <property type="entry name" value="Orn_Arg_deC_N"/>
    <property type="match status" value="1"/>
</dbReference>
<dbReference type="Pfam" id="PF00278">
    <property type="entry name" value="Orn_DAP_Arg_deC"/>
    <property type="match status" value="1"/>
</dbReference>
<dbReference type="PRINTS" id="PR01179">
    <property type="entry name" value="ODADCRBXLASE"/>
</dbReference>
<dbReference type="PRINTS" id="PR01182">
    <property type="entry name" value="ORNDCRBXLASE"/>
</dbReference>
<dbReference type="SUPFAM" id="SSF50621">
    <property type="entry name" value="Alanine racemase C-terminal domain-like"/>
    <property type="match status" value="1"/>
</dbReference>
<dbReference type="SUPFAM" id="SSF51419">
    <property type="entry name" value="PLP-binding barrel"/>
    <property type="match status" value="1"/>
</dbReference>
<dbReference type="PROSITE" id="PS00878">
    <property type="entry name" value="ODR_DC_2_1"/>
    <property type="match status" value="1"/>
</dbReference>
<dbReference type="PROSITE" id="PS00879">
    <property type="entry name" value="ODR_DC_2_2"/>
    <property type="match status" value="1"/>
</dbReference>
<reference key="1">
    <citation type="submission" date="1999-08" db="EMBL/GenBank/DDBJ databases">
        <title>Aspirin and Salicylic Acid Do not Inhibit Methyl Jasmonate-inducible Expression of a Gene for Ornithine Decarboxylase in Tabacco BY-2 Cells.</title>
        <authorList>
            <person name="Imanishi S."/>
            <person name="Nakakita M."/>
            <person name="Yamashita K."/>
            <person name="Furuta A."/>
            <person name="Utsuno K."/>
            <person name="Muramoto N."/>
            <person name="Kojima H."/>
            <person name="Nakamura K."/>
        </authorList>
    </citation>
    <scope>NUCLEOTIDE SEQUENCE [GENOMIC DNA]</scope>
    <source>
        <strain>cv. NK 326</strain>
    </source>
</reference>
<reference key="2">
    <citation type="submission" date="2015-02" db="EMBL/GenBank/DDBJ databases">
        <title>Plant lysine decarboxylase independently evolved from ornithine decarboxylase to produce alkaloids.</title>
        <authorList>
            <person name="Bunsupa S."/>
            <person name="Yamazaki M."/>
            <person name="Saito K."/>
        </authorList>
    </citation>
    <scope>NUCLEOTIDE SEQUENCE [MRNA]</scope>
    <source>
        <strain>cv. Petit Havana SR1</strain>
    </source>
</reference>
<reference key="3">
    <citation type="journal article" date="2014" name="Nat. Commun.">
        <title>The tobacco genome sequence and its comparison with those of tomato and potato.</title>
        <authorList>
            <person name="Sierro N."/>
            <person name="Battey J.N."/>
            <person name="Ouadi S."/>
            <person name="Bakaher N."/>
            <person name="Bovet L."/>
            <person name="Willig A."/>
            <person name="Goepfert S."/>
            <person name="Peitsch M.C."/>
            <person name="Ivanov N.V."/>
        </authorList>
    </citation>
    <scope>NUCLEOTIDE SEQUENCE [LARGE SCALE GENOMIC DNA]</scope>
    <source>
        <strain>cv. TN90</strain>
    </source>
</reference>
<reference key="4">
    <citation type="journal article" date="2013" name="Phytochemistry">
        <title>Molecular genetics of alkaloid biosynthesis in Nicotiana tabacum.</title>
        <authorList>
            <person name="Dewey R.E."/>
            <person name="Xie J."/>
        </authorList>
    </citation>
    <scope>REVIEW ON ALKALOID BIOSYNTHESIS IN NICOTIANA TABACUM</scope>
</reference>
<reference key="5">
    <citation type="journal article" date="2015" name="Mol. Genet. Genomics">
        <title>Current status and prospects for the study of Nicotiana genomics, genetics, and nicotine biosynthesis genes.</title>
        <authorList>
            <person name="Wang X."/>
            <person name="Bennetzen J.L."/>
        </authorList>
    </citation>
    <scope>REVIEW ON NICOTINE BIOSYNTHESIS</scope>
</reference>
<reference key="6">
    <citation type="journal article" date="2016" name="J. Exp. Bot.">
        <title>Effects of down-regulating ornithine decarboxylase upon putrescine-associated metabolism and growth in Nicotiana tabacum L.</title>
        <authorList>
            <person name="Dalton H.L."/>
            <person name="Blomstedt C.K."/>
            <person name="Neale A.D."/>
            <person name="Gleadow R."/>
            <person name="DeBoer K.D."/>
            <person name="Hamill J.D."/>
        </authorList>
    </citation>
    <scope>FUNCTION</scope>
    <scope>DISRUPTION PHENOTYPE</scope>
    <source>
        <strain>cv. SC58</strain>
    </source>
</reference>
<reference key="7">
    <citation type="journal article" date="2020" name="Planta">
        <title>Genetic attenuation of alkaloids and nicotine content in tobacco (Nicotiana tabacum).</title>
        <authorList>
            <person name="Hidalgo Martinez D."/>
            <person name="Payyavula R.S."/>
            <person name="Kudithipudi C."/>
            <person name="Shen Y."/>
            <person name="Xu D."/>
            <person name="Warek U."/>
            <person name="Strickland J.A."/>
            <person name="Melis A."/>
        </authorList>
    </citation>
    <scope>FUNCTION</scope>
    <scope>DISRUPTION PHENOTYPE</scope>
    <scope>PATHWAY</scope>
    <source>
        <strain>cv. K326-ALCS3</strain>
    </source>
</reference>
<keyword id="KW-0017">Alkaloid metabolism</keyword>
<keyword id="KW-0150">Chloroplast</keyword>
<keyword id="KW-0456">Lyase</keyword>
<keyword id="KW-0934">Plastid</keyword>
<keyword id="KW-0663">Pyridoxal phosphate</keyword>
<keyword id="KW-1185">Reference proteome</keyword>
<keyword id="KW-0809">Transit peptide</keyword>
<protein>
    <recommendedName>
        <fullName evidence="8">Ornithine decarboxylase 1A, chloroplastic</fullName>
        <ecNumber evidence="4">4.1.1.17</ecNumber>
    </recommendedName>
</protein>